<gene>
    <name evidence="1" type="primary">potA</name>
    <name type="ordered locus">Ecok1_10160</name>
    <name type="ORF">APECO1_208</name>
</gene>
<keyword id="KW-0067">ATP-binding</keyword>
<keyword id="KW-0997">Cell inner membrane</keyword>
<keyword id="KW-1003">Cell membrane</keyword>
<keyword id="KW-0472">Membrane</keyword>
<keyword id="KW-0547">Nucleotide-binding</keyword>
<keyword id="KW-1185">Reference proteome</keyword>
<keyword id="KW-1278">Translocase</keyword>
<keyword id="KW-0813">Transport</keyword>
<organism>
    <name type="scientific">Escherichia coli O1:K1 / APEC</name>
    <dbReference type="NCBI Taxonomy" id="405955"/>
    <lineage>
        <taxon>Bacteria</taxon>
        <taxon>Pseudomonadati</taxon>
        <taxon>Pseudomonadota</taxon>
        <taxon>Gammaproteobacteria</taxon>
        <taxon>Enterobacterales</taxon>
        <taxon>Enterobacteriaceae</taxon>
        <taxon>Escherichia</taxon>
    </lineage>
</organism>
<name>POTA_ECOK1</name>
<evidence type="ECO:0000255" key="1">
    <source>
        <dbReference type="HAMAP-Rule" id="MF_01726"/>
    </source>
</evidence>
<protein>
    <recommendedName>
        <fullName evidence="1">Spermidine/putrescine import ATP-binding protein PotA</fullName>
        <ecNumber evidence="1">7.6.2.11</ecNumber>
    </recommendedName>
</protein>
<feature type="chain" id="PRO_0000286217" description="Spermidine/putrescine import ATP-binding protein PotA">
    <location>
        <begin position="1"/>
        <end position="378"/>
    </location>
</feature>
<feature type="domain" description="ABC transporter" evidence="1">
    <location>
        <begin position="18"/>
        <end position="248"/>
    </location>
</feature>
<feature type="binding site" evidence="1">
    <location>
        <begin position="50"/>
        <end position="57"/>
    </location>
    <ligand>
        <name>ATP</name>
        <dbReference type="ChEBI" id="CHEBI:30616"/>
    </ligand>
</feature>
<sequence>MGQSKKLNKQPNSLSPLVQLAGIRKCFDGKEVIPQLDLTINNGEFLTLLGPSGCGKTTVLRLIAGLETVDSGRIMLDNEDITHVPAENRYVNTVFQSYALFPHMTVFENVAFGLRMQKTPAAEITPRVMEALRMVQLETFAQRKPHQLSGGQQQRVAIARAVVNKPRLLLLDESLSALDYKLRKQMQNELKALQRKLGITFVFVTHDQEEALTMSDRIVVMRDGRIEQDGTPREIYEEPKNLFVAGFIGEINMFNATVIERLDEQRVRANVEGRECNIYVNFAVEPGQKLHVLLRPEDLRVEEINDDNHAEGLIGYVRERNYKGMTLESVVELENGKMVMVSEFFNEDDPDFDHSLDQKMAINWVESWEVVLADEEHK</sequence>
<reference key="1">
    <citation type="journal article" date="2007" name="J. Bacteriol.">
        <title>The genome sequence of avian pathogenic Escherichia coli strain O1:K1:H7 shares strong similarities with human extraintestinal pathogenic E. coli genomes.</title>
        <authorList>
            <person name="Johnson T.J."/>
            <person name="Kariyawasam S."/>
            <person name="Wannemuehler Y."/>
            <person name="Mangiamele P."/>
            <person name="Johnson S.J."/>
            <person name="Doetkott C."/>
            <person name="Skyberg J.A."/>
            <person name="Lynne A.M."/>
            <person name="Johnson J.R."/>
            <person name="Nolan L.K."/>
        </authorList>
    </citation>
    <scope>NUCLEOTIDE SEQUENCE [LARGE SCALE GENOMIC DNA]</scope>
</reference>
<proteinExistence type="inferred from homology"/>
<dbReference type="EC" id="7.6.2.11" evidence="1"/>
<dbReference type="EMBL" id="CP000468">
    <property type="protein sequence ID" value="ABJ00510.1"/>
    <property type="molecule type" value="Genomic_DNA"/>
</dbReference>
<dbReference type="RefSeq" id="WP_000531578.1">
    <property type="nucleotide sequence ID" value="NZ_CADILS010000019.1"/>
</dbReference>
<dbReference type="SMR" id="A1AA20"/>
<dbReference type="KEGG" id="ecv:APECO1_208"/>
<dbReference type="HOGENOM" id="CLU_000604_1_1_6"/>
<dbReference type="Proteomes" id="UP000008216">
    <property type="component" value="Chromosome"/>
</dbReference>
<dbReference type="GO" id="GO:0043190">
    <property type="term" value="C:ATP-binding cassette (ABC) transporter complex"/>
    <property type="evidence" value="ECO:0007669"/>
    <property type="project" value="InterPro"/>
</dbReference>
<dbReference type="GO" id="GO:0015594">
    <property type="term" value="F:ABC-type putrescine transporter activity"/>
    <property type="evidence" value="ECO:0007669"/>
    <property type="project" value="InterPro"/>
</dbReference>
<dbReference type="GO" id="GO:0005524">
    <property type="term" value="F:ATP binding"/>
    <property type="evidence" value="ECO:0007669"/>
    <property type="project" value="UniProtKB-KW"/>
</dbReference>
<dbReference type="GO" id="GO:0016887">
    <property type="term" value="F:ATP hydrolysis activity"/>
    <property type="evidence" value="ECO:0007669"/>
    <property type="project" value="InterPro"/>
</dbReference>
<dbReference type="CDD" id="cd03300">
    <property type="entry name" value="ABC_PotA_N"/>
    <property type="match status" value="1"/>
</dbReference>
<dbReference type="FunFam" id="2.40.50.100:FF:000017">
    <property type="entry name" value="Spermidine/putrescine import ATP-binding protein PotA"/>
    <property type="match status" value="1"/>
</dbReference>
<dbReference type="FunFam" id="3.40.50.300:FF:000133">
    <property type="entry name" value="Spermidine/putrescine import ATP-binding protein PotA"/>
    <property type="match status" value="1"/>
</dbReference>
<dbReference type="Gene3D" id="2.40.50.100">
    <property type="match status" value="1"/>
</dbReference>
<dbReference type="Gene3D" id="3.40.50.300">
    <property type="entry name" value="P-loop containing nucleotide triphosphate hydrolases"/>
    <property type="match status" value="1"/>
</dbReference>
<dbReference type="InterPro" id="IPR003593">
    <property type="entry name" value="AAA+_ATPase"/>
</dbReference>
<dbReference type="InterPro" id="IPR050093">
    <property type="entry name" value="ABC_SmlMolc_Importer"/>
</dbReference>
<dbReference type="InterPro" id="IPR003439">
    <property type="entry name" value="ABC_transporter-like_ATP-bd"/>
</dbReference>
<dbReference type="InterPro" id="IPR017871">
    <property type="entry name" value="ABC_transporter-like_CS"/>
</dbReference>
<dbReference type="InterPro" id="IPR008995">
    <property type="entry name" value="Mo/tungstate-bd_C_term_dom"/>
</dbReference>
<dbReference type="InterPro" id="IPR027417">
    <property type="entry name" value="P-loop_NTPase"/>
</dbReference>
<dbReference type="InterPro" id="IPR005893">
    <property type="entry name" value="PotA-like"/>
</dbReference>
<dbReference type="InterPro" id="IPR017879">
    <property type="entry name" value="PotA_ATP-bd"/>
</dbReference>
<dbReference type="InterPro" id="IPR013611">
    <property type="entry name" value="Transp-assoc_OB_typ2"/>
</dbReference>
<dbReference type="NCBIfam" id="TIGR01187">
    <property type="entry name" value="potA"/>
    <property type="match status" value="1"/>
</dbReference>
<dbReference type="NCBIfam" id="NF006987">
    <property type="entry name" value="PRK09452.1"/>
    <property type="match status" value="1"/>
</dbReference>
<dbReference type="PANTHER" id="PTHR42781">
    <property type="entry name" value="SPERMIDINE/PUTRESCINE IMPORT ATP-BINDING PROTEIN POTA"/>
    <property type="match status" value="1"/>
</dbReference>
<dbReference type="PANTHER" id="PTHR42781:SF4">
    <property type="entry name" value="SPERMIDINE_PUTRESCINE IMPORT ATP-BINDING PROTEIN POTA"/>
    <property type="match status" value="1"/>
</dbReference>
<dbReference type="Pfam" id="PF00005">
    <property type="entry name" value="ABC_tran"/>
    <property type="match status" value="1"/>
</dbReference>
<dbReference type="Pfam" id="PF08402">
    <property type="entry name" value="TOBE_2"/>
    <property type="match status" value="1"/>
</dbReference>
<dbReference type="SMART" id="SM00382">
    <property type="entry name" value="AAA"/>
    <property type="match status" value="1"/>
</dbReference>
<dbReference type="SUPFAM" id="SSF50331">
    <property type="entry name" value="MOP-like"/>
    <property type="match status" value="1"/>
</dbReference>
<dbReference type="SUPFAM" id="SSF52540">
    <property type="entry name" value="P-loop containing nucleoside triphosphate hydrolases"/>
    <property type="match status" value="1"/>
</dbReference>
<dbReference type="PROSITE" id="PS00211">
    <property type="entry name" value="ABC_TRANSPORTER_1"/>
    <property type="match status" value="1"/>
</dbReference>
<dbReference type="PROSITE" id="PS50893">
    <property type="entry name" value="ABC_TRANSPORTER_2"/>
    <property type="match status" value="1"/>
</dbReference>
<dbReference type="PROSITE" id="PS51305">
    <property type="entry name" value="POTA"/>
    <property type="match status" value="1"/>
</dbReference>
<comment type="function">
    <text evidence="1">Part of the ABC transporter complex PotABCD involved in spermidine/putrescine import. Responsible for energy coupling to the transport system.</text>
</comment>
<comment type="catalytic activity">
    <reaction evidence="1">
        <text>ATP + H2O + polyamine-[polyamine-binding protein]Side 1 = ADP + phosphate + polyamineSide 2 + [polyamine-binding protein]Side 1.</text>
        <dbReference type="EC" id="7.6.2.11"/>
    </reaction>
</comment>
<comment type="subunit">
    <text evidence="1">The complex is composed of two ATP-binding proteins (PotA), two transmembrane proteins (PotB and PotC) and a solute-binding protein (PotD).</text>
</comment>
<comment type="subcellular location">
    <subcellularLocation>
        <location evidence="1">Cell inner membrane</location>
        <topology evidence="1">Peripheral membrane protein</topology>
    </subcellularLocation>
</comment>
<comment type="similarity">
    <text evidence="1">Belongs to the ABC transporter superfamily. Spermidine/putrescine importer (TC 3.A.1.11.1) family.</text>
</comment>
<accession>A1AA20</accession>